<comment type="function">
    <text evidence="1">Dimethylates a single guanine residue at position 26 of a number of tRNAs using S-adenosyl-L-methionine as donor of the methyl groups.</text>
</comment>
<comment type="catalytic activity">
    <reaction evidence="2">
        <text>guanosine(26) in tRNA + 2 S-adenosyl-L-methionine = N(2)-dimethylguanosine(26) in tRNA + 2 S-adenosyl-L-homocysteine + 2 H(+)</text>
        <dbReference type="Rhea" id="RHEA:43140"/>
        <dbReference type="Rhea" id="RHEA-COMP:10359"/>
        <dbReference type="Rhea" id="RHEA-COMP:10360"/>
        <dbReference type="ChEBI" id="CHEBI:15378"/>
        <dbReference type="ChEBI" id="CHEBI:57856"/>
        <dbReference type="ChEBI" id="CHEBI:59789"/>
        <dbReference type="ChEBI" id="CHEBI:74269"/>
        <dbReference type="ChEBI" id="CHEBI:74513"/>
        <dbReference type="EC" id="2.1.1.216"/>
    </reaction>
</comment>
<comment type="similarity">
    <text evidence="2">Belongs to the class I-like SAM-binding methyltransferase superfamily. Trm1 family.</text>
</comment>
<feature type="chain" id="PRO_0000147692" description="tRNA (guanine(26)-N(2))-dimethyltransferase">
    <location>
        <begin position="1"/>
        <end position="73" status="greater than"/>
    </location>
</feature>
<feature type="domain" description="Trm1 methyltransferase" evidence="2">
    <location>
        <begin position="6"/>
        <end position="73"/>
    </location>
</feature>
<feature type="non-terminal residue">
    <location>
        <position position="73"/>
    </location>
</feature>
<gene>
    <name type="primary">trm1</name>
</gene>
<evidence type="ECO:0000250" key="1"/>
<evidence type="ECO:0000255" key="2">
    <source>
        <dbReference type="PROSITE-ProRule" id="PRU00958"/>
    </source>
</evidence>
<organism>
    <name type="scientific">Pyrococcus woesei</name>
    <dbReference type="NCBI Taxonomy" id="2262"/>
    <lineage>
        <taxon>Archaea</taxon>
        <taxon>Methanobacteriati</taxon>
        <taxon>Methanobacteriota</taxon>
        <taxon>Thermococci</taxon>
        <taxon>Thermococcales</taxon>
        <taxon>Thermococcaceae</taxon>
        <taxon>Pyrococcus</taxon>
    </lineage>
</organism>
<reference key="1">
    <citation type="journal article" date="1990" name="J. Bacteriol.">
        <title>Glyceraldehyde-3-phosphate dehydrogenase from the hyperthermophilic archaebacterium Pyrococcus woesei: characterization of the enzyme, cloning and sequencing of the gene, and expression in Escherichia coli.</title>
        <authorList>
            <person name="Zwickl P."/>
            <person name="Fabry S."/>
            <person name="Bogedain C."/>
            <person name="Haas A."/>
            <person name="Hensel R."/>
        </authorList>
    </citation>
    <scope>NUCLEOTIDE SEQUENCE [GENOMIC DNA]</scope>
    <source>
        <strain>ATCC 49860 / DSM 3773 / JCM 8421 / Vul4</strain>
    </source>
</reference>
<reference key="2">
    <citation type="journal article" date="1995" name="Nucleic Acids Res.">
        <title>Novel protein families in archaean genomes.</title>
        <authorList>
            <person name="Ouzounis C."/>
            <person name="Kyrpides N."/>
            <person name="Sander C."/>
        </authorList>
    </citation>
    <scope>SIMILARITY</scope>
</reference>
<proteinExistence type="inferred from homology"/>
<protein>
    <recommendedName>
        <fullName>tRNA (guanine(26)-N(2))-dimethyltransferase</fullName>
        <ecNumber>2.1.1.216</ecNumber>
    </recommendedName>
    <alternativeName>
        <fullName>tRNA 2,2-dimethylguanosine-26 methyltransferase</fullName>
    </alternativeName>
    <alternativeName>
        <fullName>tRNA(guanine-26,N(2)-N(2)) methyltransferase</fullName>
    </alternativeName>
    <alternativeName>
        <fullName>tRNA(m(2,2)G26)dimethyltransferase</fullName>
    </alternativeName>
</protein>
<sequence>MSMELFEVHEGKAKVLVPKAKTIYDSPVFYNPRMAPNRDVVVLLLNVLKPKIVLDALSATGIRGIRFALETPA</sequence>
<name>TRM1_PYRWO</name>
<keyword id="KW-0489">Methyltransferase</keyword>
<keyword id="KW-0694">RNA-binding</keyword>
<keyword id="KW-0949">S-adenosyl-L-methionine</keyword>
<keyword id="KW-0808">Transferase</keyword>
<keyword id="KW-0819">tRNA processing</keyword>
<keyword id="KW-0820">tRNA-binding</keyword>
<dbReference type="EC" id="2.1.1.216"/>
<dbReference type="PIR" id="S10650">
    <property type="entry name" value="S10650"/>
</dbReference>
<dbReference type="SMR" id="P20300"/>
<dbReference type="GO" id="GO:0160104">
    <property type="term" value="F:tRNA (guanine(26)-N2)-dimethyltransferase activity"/>
    <property type="evidence" value="ECO:0007669"/>
    <property type="project" value="UniProtKB-EC"/>
</dbReference>
<dbReference type="GO" id="GO:0000049">
    <property type="term" value="F:tRNA binding"/>
    <property type="evidence" value="ECO:0007669"/>
    <property type="project" value="UniProtKB-KW"/>
</dbReference>
<dbReference type="GO" id="GO:0002940">
    <property type="term" value="P:tRNA N2-guanine methylation"/>
    <property type="evidence" value="ECO:0007669"/>
    <property type="project" value="TreeGrafter"/>
</dbReference>
<dbReference type="Gene3D" id="3.40.50.150">
    <property type="entry name" value="Vaccinia Virus protein VP39"/>
    <property type="match status" value="1"/>
</dbReference>
<dbReference type="InterPro" id="IPR029063">
    <property type="entry name" value="SAM-dependent_MTases_sf"/>
</dbReference>
<dbReference type="InterPro" id="IPR002905">
    <property type="entry name" value="Trm1"/>
</dbReference>
<dbReference type="PANTHER" id="PTHR10631">
    <property type="entry name" value="N 2 ,N 2 -DIMETHYLGUANOSINE TRNA METHYLTRANSFERASE"/>
    <property type="match status" value="1"/>
</dbReference>
<dbReference type="PANTHER" id="PTHR10631:SF3">
    <property type="entry name" value="TRNA (GUANINE(26)-N(2))-DIMETHYLTRANSFERASE"/>
    <property type="match status" value="1"/>
</dbReference>
<dbReference type="Pfam" id="PF02005">
    <property type="entry name" value="TRM"/>
    <property type="match status" value="1"/>
</dbReference>
<dbReference type="SUPFAM" id="SSF53335">
    <property type="entry name" value="S-adenosyl-L-methionine-dependent methyltransferases"/>
    <property type="match status" value="1"/>
</dbReference>
<dbReference type="PROSITE" id="PS51626">
    <property type="entry name" value="SAM_MT_TRM1"/>
    <property type="match status" value="1"/>
</dbReference>
<accession>P20300</accession>